<gene>
    <name type="primary">gK</name>
    <name type="ORF">ORF5</name>
</gene>
<keyword id="KW-0325">Glycoprotein</keyword>
<keyword id="KW-1032">Host cell membrane</keyword>
<keyword id="KW-1039">Host endosome</keyword>
<keyword id="KW-1040">Host Golgi apparatus</keyword>
<keyword id="KW-1043">Host membrane</keyword>
<keyword id="KW-0472">Membrane</keyword>
<keyword id="KW-1185">Reference proteome</keyword>
<keyword id="KW-0732">Signal</keyword>
<keyword id="KW-1180">Syncytium formation induced by viral infection</keyword>
<keyword id="KW-0812">Transmembrane</keyword>
<keyword id="KW-1133">Transmembrane helix</keyword>
<keyword id="KW-1181">Viral primary envelope fusion with host outer nuclear membrane</keyword>
<keyword id="KW-1188">Viral release from host cell</keyword>
<dbReference type="EMBL" id="X04370">
    <property type="protein sequence ID" value="CAA27888.1"/>
    <property type="molecule type" value="Genomic_DNA"/>
</dbReference>
<dbReference type="PIR" id="E27212">
    <property type="entry name" value="MMBE5"/>
</dbReference>
<dbReference type="SMR" id="P09261"/>
<dbReference type="GlyCosmos" id="P09261">
    <property type="glycosylation" value="1 site, No reported glycans"/>
</dbReference>
<dbReference type="Proteomes" id="UP000002602">
    <property type="component" value="Genome"/>
</dbReference>
<dbReference type="GO" id="GO:0044175">
    <property type="term" value="C:host cell endosome membrane"/>
    <property type="evidence" value="ECO:0007669"/>
    <property type="project" value="UniProtKB-SubCell"/>
</dbReference>
<dbReference type="GO" id="GO:0044178">
    <property type="term" value="C:host cell Golgi membrane"/>
    <property type="evidence" value="ECO:0007669"/>
    <property type="project" value="UniProtKB-SubCell"/>
</dbReference>
<dbReference type="GO" id="GO:0020002">
    <property type="term" value="C:host cell plasma membrane"/>
    <property type="evidence" value="ECO:0007669"/>
    <property type="project" value="UniProtKB-SubCell"/>
</dbReference>
<dbReference type="GO" id="GO:0016020">
    <property type="term" value="C:membrane"/>
    <property type="evidence" value="ECO:0007669"/>
    <property type="project" value="UniProtKB-KW"/>
</dbReference>
<dbReference type="GO" id="GO:0039700">
    <property type="term" value="P:fusion of viral membrane with host outer nuclear membrane"/>
    <property type="evidence" value="ECO:0007669"/>
    <property type="project" value="UniProtKB-KW"/>
</dbReference>
<dbReference type="GO" id="GO:0060141">
    <property type="term" value="P:symbiont-mediated induction of syncytium formation"/>
    <property type="evidence" value="ECO:0007669"/>
    <property type="project" value="UniProtKB-KW"/>
</dbReference>
<dbReference type="InterPro" id="IPR002567">
    <property type="entry name" value="GK"/>
</dbReference>
<dbReference type="Pfam" id="PF01621">
    <property type="entry name" value="Fusion_gly_K"/>
    <property type="match status" value="1"/>
</dbReference>
<evidence type="ECO:0000250" key="1"/>
<evidence type="ECO:0000255" key="2"/>
<evidence type="ECO:0000305" key="3"/>
<accession>P09261</accession>
<proteinExistence type="inferred from homology"/>
<comment type="function">
    <text evidence="1">Glycoprotein that probably modulates membrane fusion events during secondary envelopment of cytoplasmic capsids that bud into specific trans-Golgi network (TGN)-derived membranes. Also plays a role, together with gB, in virus-induced cell-to-cell fusion (syncytia formation), which is extensive during VZV infection in cultured cells (By similarity).</text>
</comment>
<comment type="subunit">
    <text>Interacts (via UL20 interaction region) with protein UL20 homolog (via N-terminus); this interaction probably plays a role in the coordinate transport of protein UL20 homolog and gK to the trans-Golgi network (TGN), and is required for the cell surface expression of gK.</text>
</comment>
<comment type="subcellular location">
    <subcellularLocation>
        <location>Host cell membrane</location>
        <topology>Multi-pass membrane protein</topology>
    </subcellularLocation>
    <subcellularLocation>
        <location>Host endosome membrane</location>
        <topology>Multi-pass membrane protein</topology>
    </subcellularLocation>
    <subcellularLocation>
        <location>Host Golgi apparatus membrane</location>
        <topology>Multi-pass membrane protein</topology>
    </subcellularLocation>
    <text evidence="1">During virion morphogenesis, this protein probably accumulates in the endosomes and trans-Golgi where secondary envelopment occurs. It is probably transported with UL20 to the cell surface from where it is endocytosed and directed to the trans-Golgi network (TGN). Cell surface expression of gK is required for virus-induced cell-to-cell fusion. Likely not present in extracellular virions (By similarity).</text>
</comment>
<comment type="similarity">
    <text evidence="3">Belongs to the alphaherpesvirinae glycoprotein K family.</text>
</comment>
<sequence>MQALGIKTEHFIIMCLLSGHAVFTLWYTARVKFEHECVYATTVINGGPVVWGSYNNSLIYVTFVNHSTFLDGLSGYDYSCRENLLSGDTMVKTAISTPLHDKIRIVLGTRNCHAYFWCVQLKMIFFAWFVYGMYLQFRRIRRMFGPFRSSCELISPTSYSLNYVTRVISNILLGYPYTKLARLLCDVSMRRDGMSKVFNADPISFLYMHKGVTLLMLLEVIAHISSGCIVLLTLGVAYTPCALLYPTYIRILAWVVVCTLAIVELISYVRPKPTKDNHLNHINTGGIRGICTTCCATVMSGLAIKCFYIVIFAIAVVIFMHYEQRVQVSLFGESENSQKH</sequence>
<protein>
    <recommendedName>
        <fullName>Envelope glycoprotein K</fullName>
    </recommendedName>
    <alternativeName>
        <fullName>Syncytial protein</fullName>
    </alternativeName>
</protein>
<feature type="signal peptide" evidence="2">
    <location>
        <begin position="1"/>
        <end position="21"/>
    </location>
</feature>
<feature type="chain" id="PRO_0000038306" description="Envelope glycoprotein K">
    <location>
        <begin position="22"/>
        <end position="340"/>
    </location>
</feature>
<feature type="topological domain" description="Extracellular">
    <location>
        <begin position="22"/>
        <end position="114"/>
    </location>
</feature>
<feature type="transmembrane region" description="Helical" evidence="2">
    <location>
        <begin position="115"/>
        <end position="135"/>
    </location>
</feature>
<feature type="topological domain" description="Cytoplasmic" evidence="2">
    <location>
        <begin position="136"/>
        <end position="211"/>
    </location>
</feature>
<feature type="transmembrane region" description="Helical" evidence="2">
    <location>
        <begin position="212"/>
        <end position="232"/>
    </location>
</feature>
<feature type="topological domain" description="Extracellular" evidence="2">
    <location>
        <begin position="233"/>
        <end position="248"/>
    </location>
</feature>
<feature type="transmembrane region" description="Helical" evidence="2">
    <location>
        <begin position="249"/>
        <end position="269"/>
    </location>
</feature>
<feature type="topological domain" description="Cytoplasmic" evidence="2">
    <location>
        <begin position="270"/>
        <end position="298"/>
    </location>
</feature>
<feature type="transmembrane region" description="Helical" evidence="2">
    <location>
        <begin position="299"/>
        <end position="319"/>
    </location>
</feature>
<feature type="topological domain" description="Extracellular" evidence="2">
    <location>
        <begin position="320"/>
        <end position="340"/>
    </location>
</feature>
<feature type="glycosylation site" description="N-linked (GlcNAc...) asparagine; by host" evidence="2">
    <location>
        <position position="65"/>
    </location>
</feature>
<organism>
    <name type="scientific">Varicella-zoster virus (strain Dumas)</name>
    <name type="common">HHV-3</name>
    <name type="synonym">Human herpesvirus 3</name>
    <dbReference type="NCBI Taxonomy" id="10338"/>
    <lineage>
        <taxon>Viruses</taxon>
        <taxon>Duplodnaviria</taxon>
        <taxon>Heunggongvirae</taxon>
        <taxon>Peploviricota</taxon>
        <taxon>Herviviricetes</taxon>
        <taxon>Herpesvirales</taxon>
        <taxon>Orthoherpesviridae</taxon>
        <taxon>Alphaherpesvirinae</taxon>
        <taxon>Varicellovirus</taxon>
        <taxon>Varicellovirus humanalpha3</taxon>
        <taxon>Human herpesvirus 3</taxon>
    </lineage>
</organism>
<name>GK_VZVD</name>
<organismHost>
    <name type="scientific">Homo sapiens</name>
    <name type="common">Human</name>
    <dbReference type="NCBI Taxonomy" id="9606"/>
</organismHost>
<reference key="1">
    <citation type="journal article" date="1986" name="J. Gen. Virol.">
        <title>The complete DNA sequence of varicella-zoster virus.</title>
        <authorList>
            <person name="Davison A.J."/>
            <person name="Scott J.E."/>
        </authorList>
    </citation>
    <scope>NUCLEOTIDE SEQUENCE [LARGE SCALE GENOMIC DNA]</scope>
</reference>
<reference key="2">
    <citation type="journal article" date="2007" name="Virology">
        <title>Intracellular transport and stability of varicella-zoster virus glycoprotein K.</title>
        <authorList>
            <person name="Hall S.L."/>
            <person name="Govero J.L."/>
            <person name="Heineman T.C."/>
        </authorList>
    </citation>
    <scope>SUBCELLULAR LOCATION</scope>
</reference>
<reference key="3">
    <citation type="journal article" date="2007" name="Virology">
        <title>Intracellular localization of varicella-zoster virus ORF39 protein and its functional relationship to glycoprotein K.</title>
        <authorList>
            <person name="Govero J.L."/>
            <person name="Hall S.L."/>
            <person name="Heineman T.C."/>
        </authorList>
    </citation>
    <scope>SUBCELLULAR LOCATION</scope>
</reference>